<feature type="chain" id="PRO_1000203225" description="Phosphoribosylaminoimidazole-succinocarboxamide synthase">
    <location>
        <begin position="1"/>
        <end position="295"/>
    </location>
</feature>
<sequence>MDKAVLETQFPDMNLVRKGKVRDIYDTGEAFLMVTTDRLSAFDVVLPNGIPGKGKVLTKISEFWFKQMAPLVGNHLISTDVADFPDVCQPYAKVLSGRTMLVKKAEPLPVECIVRGYISGSGWKSYQNNGTLCGITLPKGLVESDRLPEPLYTPSTKAEVGDHDINIDFAKTVDLIGRERAEKLRDLSIQIYLKGAQTALKKGIIIADTKFEFGLVDDEVILIDEVMTPDSSRFWPMDTYAPGGAQKSYDKQFVRDWLVSSGWDMKAPGPEIPQDVIAGTVAKYQEVLELITGQK</sequence>
<proteinExistence type="inferred from homology"/>
<name>PUR7_DESAH</name>
<protein>
    <recommendedName>
        <fullName evidence="1">Phosphoribosylaminoimidazole-succinocarboxamide synthase</fullName>
        <ecNumber evidence="1">6.3.2.6</ecNumber>
    </recommendedName>
    <alternativeName>
        <fullName evidence="1">SAICAR synthetase</fullName>
    </alternativeName>
</protein>
<reference key="1">
    <citation type="journal article" date="2009" name="Environ. Microbiol.">
        <title>Genome sequence of Desulfobacterium autotrophicum HRM2, a marine sulfate reducer oxidizing organic carbon completely to carbon dioxide.</title>
        <authorList>
            <person name="Strittmatter A.W."/>
            <person name="Liesegang H."/>
            <person name="Rabus R."/>
            <person name="Decker I."/>
            <person name="Amann J."/>
            <person name="Andres S."/>
            <person name="Henne A."/>
            <person name="Fricke W.F."/>
            <person name="Martinez-Arias R."/>
            <person name="Bartels D."/>
            <person name="Goesmann A."/>
            <person name="Krause L."/>
            <person name="Puehler A."/>
            <person name="Klenk H.P."/>
            <person name="Richter M."/>
            <person name="Schuler M."/>
            <person name="Gloeckner F.O."/>
            <person name="Meyerdierks A."/>
            <person name="Gottschalk G."/>
            <person name="Amann R."/>
        </authorList>
    </citation>
    <scope>NUCLEOTIDE SEQUENCE [LARGE SCALE GENOMIC DNA]</scope>
    <source>
        <strain>ATCC 43914 / DSM 3382 / VKM B-1955 / HRM2</strain>
    </source>
</reference>
<dbReference type="EC" id="6.3.2.6" evidence="1"/>
<dbReference type="EMBL" id="CP001087">
    <property type="protein sequence ID" value="ACN15671.1"/>
    <property type="molecule type" value="Genomic_DNA"/>
</dbReference>
<dbReference type="RefSeq" id="WP_015904435.1">
    <property type="nucleotide sequence ID" value="NC_012108.1"/>
</dbReference>
<dbReference type="SMR" id="C0QH22"/>
<dbReference type="STRING" id="177437.HRM2_25770"/>
<dbReference type="KEGG" id="dat:HRM2_25770"/>
<dbReference type="eggNOG" id="COG0152">
    <property type="taxonomic scope" value="Bacteria"/>
</dbReference>
<dbReference type="HOGENOM" id="CLU_045637_0_0_7"/>
<dbReference type="OrthoDB" id="9801549at2"/>
<dbReference type="UniPathway" id="UPA00074">
    <property type="reaction ID" value="UER00131"/>
</dbReference>
<dbReference type="Proteomes" id="UP000000442">
    <property type="component" value="Chromosome"/>
</dbReference>
<dbReference type="GO" id="GO:0005737">
    <property type="term" value="C:cytoplasm"/>
    <property type="evidence" value="ECO:0007669"/>
    <property type="project" value="TreeGrafter"/>
</dbReference>
<dbReference type="GO" id="GO:0005524">
    <property type="term" value="F:ATP binding"/>
    <property type="evidence" value="ECO:0007669"/>
    <property type="project" value="UniProtKB-KW"/>
</dbReference>
<dbReference type="GO" id="GO:0004639">
    <property type="term" value="F:phosphoribosylaminoimidazolesuccinocarboxamide synthase activity"/>
    <property type="evidence" value="ECO:0007669"/>
    <property type="project" value="UniProtKB-UniRule"/>
</dbReference>
<dbReference type="GO" id="GO:0006189">
    <property type="term" value="P:'de novo' IMP biosynthetic process"/>
    <property type="evidence" value="ECO:0007669"/>
    <property type="project" value="UniProtKB-UniRule"/>
</dbReference>
<dbReference type="CDD" id="cd01414">
    <property type="entry name" value="SAICAR_synt_Sc"/>
    <property type="match status" value="1"/>
</dbReference>
<dbReference type="FunFam" id="3.30.470.20:FF:000015">
    <property type="entry name" value="Phosphoribosylaminoimidazole-succinocarboxamide synthase"/>
    <property type="match status" value="1"/>
</dbReference>
<dbReference type="Gene3D" id="3.30.470.20">
    <property type="entry name" value="ATP-grasp fold, B domain"/>
    <property type="match status" value="1"/>
</dbReference>
<dbReference type="Gene3D" id="3.30.200.20">
    <property type="entry name" value="Phosphorylase Kinase, domain 1"/>
    <property type="match status" value="1"/>
</dbReference>
<dbReference type="HAMAP" id="MF_00137">
    <property type="entry name" value="SAICAR_synth"/>
    <property type="match status" value="1"/>
</dbReference>
<dbReference type="InterPro" id="IPR028923">
    <property type="entry name" value="SAICAR_synt/ADE2_N"/>
</dbReference>
<dbReference type="InterPro" id="IPR001636">
    <property type="entry name" value="SAICAR_synth"/>
</dbReference>
<dbReference type="InterPro" id="IPR018236">
    <property type="entry name" value="SAICAR_synthetase_CS"/>
</dbReference>
<dbReference type="NCBIfam" id="NF010568">
    <property type="entry name" value="PRK13961.1"/>
    <property type="match status" value="1"/>
</dbReference>
<dbReference type="NCBIfam" id="TIGR00081">
    <property type="entry name" value="purC"/>
    <property type="match status" value="1"/>
</dbReference>
<dbReference type="PANTHER" id="PTHR43700">
    <property type="entry name" value="PHOSPHORIBOSYLAMINOIMIDAZOLE-SUCCINOCARBOXAMIDE SYNTHASE"/>
    <property type="match status" value="1"/>
</dbReference>
<dbReference type="PANTHER" id="PTHR43700:SF1">
    <property type="entry name" value="PHOSPHORIBOSYLAMINOIMIDAZOLE-SUCCINOCARBOXAMIDE SYNTHASE"/>
    <property type="match status" value="1"/>
</dbReference>
<dbReference type="Pfam" id="PF01259">
    <property type="entry name" value="SAICAR_synt"/>
    <property type="match status" value="1"/>
</dbReference>
<dbReference type="SUPFAM" id="SSF56104">
    <property type="entry name" value="SAICAR synthase-like"/>
    <property type="match status" value="1"/>
</dbReference>
<dbReference type="PROSITE" id="PS01057">
    <property type="entry name" value="SAICAR_SYNTHETASE_1"/>
    <property type="match status" value="1"/>
</dbReference>
<dbReference type="PROSITE" id="PS01058">
    <property type="entry name" value="SAICAR_SYNTHETASE_2"/>
    <property type="match status" value="1"/>
</dbReference>
<keyword id="KW-0067">ATP-binding</keyword>
<keyword id="KW-0436">Ligase</keyword>
<keyword id="KW-0547">Nucleotide-binding</keyword>
<keyword id="KW-0658">Purine biosynthesis</keyword>
<keyword id="KW-1185">Reference proteome</keyword>
<organism>
    <name type="scientific">Desulforapulum autotrophicum (strain ATCC 43914 / DSM 3382 / VKM B-1955 / HRM2)</name>
    <name type="common">Desulfobacterium autotrophicum</name>
    <dbReference type="NCBI Taxonomy" id="177437"/>
    <lineage>
        <taxon>Bacteria</taxon>
        <taxon>Pseudomonadati</taxon>
        <taxon>Thermodesulfobacteriota</taxon>
        <taxon>Desulfobacteria</taxon>
        <taxon>Desulfobacterales</taxon>
        <taxon>Desulfobacteraceae</taxon>
        <taxon>Desulforapulum</taxon>
    </lineage>
</organism>
<evidence type="ECO:0000255" key="1">
    <source>
        <dbReference type="HAMAP-Rule" id="MF_00137"/>
    </source>
</evidence>
<accession>C0QH22</accession>
<gene>
    <name evidence="1" type="primary">purC</name>
    <name type="ordered locus">HRM2_25770</name>
</gene>
<comment type="catalytic activity">
    <reaction evidence="1">
        <text>5-amino-1-(5-phospho-D-ribosyl)imidazole-4-carboxylate + L-aspartate + ATP = (2S)-2-[5-amino-1-(5-phospho-beta-D-ribosyl)imidazole-4-carboxamido]succinate + ADP + phosphate + 2 H(+)</text>
        <dbReference type="Rhea" id="RHEA:22628"/>
        <dbReference type="ChEBI" id="CHEBI:15378"/>
        <dbReference type="ChEBI" id="CHEBI:29991"/>
        <dbReference type="ChEBI" id="CHEBI:30616"/>
        <dbReference type="ChEBI" id="CHEBI:43474"/>
        <dbReference type="ChEBI" id="CHEBI:58443"/>
        <dbReference type="ChEBI" id="CHEBI:77657"/>
        <dbReference type="ChEBI" id="CHEBI:456216"/>
        <dbReference type="EC" id="6.3.2.6"/>
    </reaction>
</comment>
<comment type="pathway">
    <text evidence="1">Purine metabolism; IMP biosynthesis via de novo pathway; 5-amino-1-(5-phospho-D-ribosyl)imidazole-4-carboxamide from 5-amino-1-(5-phospho-D-ribosyl)imidazole-4-carboxylate: step 1/2.</text>
</comment>
<comment type="similarity">
    <text evidence="1">Belongs to the SAICAR synthetase family.</text>
</comment>